<feature type="chain" id="PRO_1000149724" description="Esterase FrsA">
    <location>
        <begin position="1"/>
        <end position="414"/>
    </location>
</feature>
<proteinExistence type="inferred from homology"/>
<sequence length="414" mass="47160">MTQANLSETLFKPRFKHTETSTLVRRFNRGSQPPMQSALDGKNVPHWYRMINRLMWIWRGVDPREILDVQARIVMSDAERTDDDLYDTVIGYRGGNWIYEWAKQAMDWQQKACQEQDAMRSGRYWLHASTLYNIAAYPHLKGDELAEQAQALANRAYEEAAQRLPGSLREMEFAVPGGSPVTAFLHMPKGDGPFPTVLMCGGLDAMQTDYYTLYERYFAPRGIAMLTLDMPSVGFSSKWKLTQDSSLLHQHVLKALPNVPWVDHTRVAAFGFRFGANVAVRLAYLEAPRLKAVACLGPVVHALLSDPQRQSTVPEMYLDVLASRLGMHDASDEALRVELNRYSLKVQGLLGRRCPTPMLSGFWKNDPFSPEEESRLITTSSSDGKLIEIPFNPVYRNFDRALQEITDWINHRLC</sequence>
<comment type="function">
    <text evidence="1">Catalyzes the hydrolysis of esters.</text>
</comment>
<comment type="catalytic activity">
    <reaction evidence="1">
        <text>a carboxylic ester + H2O = an alcohol + a carboxylate + H(+)</text>
        <dbReference type="Rhea" id="RHEA:21164"/>
        <dbReference type="ChEBI" id="CHEBI:15377"/>
        <dbReference type="ChEBI" id="CHEBI:15378"/>
        <dbReference type="ChEBI" id="CHEBI:29067"/>
        <dbReference type="ChEBI" id="CHEBI:30879"/>
        <dbReference type="ChEBI" id="CHEBI:33308"/>
        <dbReference type="EC" id="3.1.1.1"/>
    </reaction>
</comment>
<comment type="similarity">
    <text evidence="1">Belongs to the FrsA family.</text>
</comment>
<dbReference type="EC" id="3.1.1.1" evidence="1"/>
<dbReference type="EMBL" id="CP000857">
    <property type="protein sequence ID" value="ACN44516.1"/>
    <property type="molecule type" value="Genomic_DNA"/>
</dbReference>
<dbReference type="RefSeq" id="WP_000189588.1">
    <property type="nucleotide sequence ID" value="NC_012125.1"/>
</dbReference>
<dbReference type="SMR" id="C0Q6T7"/>
<dbReference type="ESTHER" id="salty-yafa">
    <property type="family name" value="Duf_1100-R"/>
</dbReference>
<dbReference type="KEGG" id="sei:SPC_0329"/>
<dbReference type="HOGENOM" id="CLU_036819_0_0_6"/>
<dbReference type="Proteomes" id="UP000001599">
    <property type="component" value="Chromosome"/>
</dbReference>
<dbReference type="GO" id="GO:0106435">
    <property type="term" value="F:carboxylesterase activity"/>
    <property type="evidence" value="ECO:0007669"/>
    <property type="project" value="UniProtKB-EC"/>
</dbReference>
<dbReference type="FunFam" id="3.40.50.1820:FF:000022">
    <property type="entry name" value="Esterase FrsA"/>
    <property type="match status" value="1"/>
</dbReference>
<dbReference type="Gene3D" id="3.40.50.1820">
    <property type="entry name" value="alpha/beta hydrolase"/>
    <property type="match status" value="1"/>
</dbReference>
<dbReference type="HAMAP" id="MF_01063">
    <property type="entry name" value="FrsA"/>
    <property type="match status" value="1"/>
</dbReference>
<dbReference type="InterPro" id="IPR029058">
    <property type="entry name" value="AB_hydrolase_fold"/>
</dbReference>
<dbReference type="InterPro" id="IPR043423">
    <property type="entry name" value="FrsA"/>
</dbReference>
<dbReference type="InterPro" id="IPR010520">
    <property type="entry name" value="FrsA-like"/>
</dbReference>
<dbReference type="InterPro" id="IPR050261">
    <property type="entry name" value="FrsA_esterase"/>
</dbReference>
<dbReference type="NCBIfam" id="NF003460">
    <property type="entry name" value="PRK05077.1"/>
    <property type="match status" value="1"/>
</dbReference>
<dbReference type="PANTHER" id="PTHR22946">
    <property type="entry name" value="DIENELACTONE HYDROLASE DOMAIN-CONTAINING PROTEIN-RELATED"/>
    <property type="match status" value="1"/>
</dbReference>
<dbReference type="PANTHER" id="PTHR22946:SF4">
    <property type="entry name" value="ESTERASE FRSA"/>
    <property type="match status" value="1"/>
</dbReference>
<dbReference type="Pfam" id="PF06500">
    <property type="entry name" value="FrsA-like"/>
    <property type="match status" value="1"/>
</dbReference>
<dbReference type="SUPFAM" id="SSF53474">
    <property type="entry name" value="alpha/beta-Hydrolases"/>
    <property type="match status" value="1"/>
</dbReference>
<organism>
    <name type="scientific">Salmonella paratyphi C (strain RKS4594)</name>
    <dbReference type="NCBI Taxonomy" id="476213"/>
    <lineage>
        <taxon>Bacteria</taxon>
        <taxon>Pseudomonadati</taxon>
        <taxon>Pseudomonadota</taxon>
        <taxon>Gammaproteobacteria</taxon>
        <taxon>Enterobacterales</taxon>
        <taxon>Enterobacteriaceae</taxon>
        <taxon>Salmonella</taxon>
    </lineage>
</organism>
<name>FRSA_SALPC</name>
<keyword id="KW-0378">Hydrolase</keyword>
<keyword id="KW-0719">Serine esterase</keyword>
<protein>
    <recommendedName>
        <fullName evidence="1">Esterase FrsA</fullName>
        <ecNumber evidence="1">3.1.1.1</ecNumber>
    </recommendedName>
</protein>
<gene>
    <name evidence="1" type="primary">frsA</name>
    <name type="ordered locus">SPC_0329</name>
</gene>
<accession>C0Q6T7</accession>
<evidence type="ECO:0000255" key="1">
    <source>
        <dbReference type="HAMAP-Rule" id="MF_01063"/>
    </source>
</evidence>
<reference key="1">
    <citation type="journal article" date="2009" name="PLoS ONE">
        <title>Salmonella paratyphi C: genetic divergence from Salmonella choleraesuis and pathogenic convergence with Salmonella typhi.</title>
        <authorList>
            <person name="Liu W.-Q."/>
            <person name="Feng Y."/>
            <person name="Wang Y."/>
            <person name="Zou Q.-H."/>
            <person name="Chen F."/>
            <person name="Guo J.-T."/>
            <person name="Peng Y.-H."/>
            <person name="Jin Y."/>
            <person name="Li Y.-G."/>
            <person name="Hu S.-N."/>
            <person name="Johnston R.N."/>
            <person name="Liu G.-R."/>
            <person name="Liu S.-L."/>
        </authorList>
    </citation>
    <scope>NUCLEOTIDE SEQUENCE [LARGE SCALE GENOMIC DNA]</scope>
    <source>
        <strain>RKS4594</strain>
    </source>
</reference>